<comment type="function">
    <text evidence="1">Catalyzes the cleavage of 5-oxoproline to form L-glutamate coupled to the hydrolysis of ATP to ADP and inorganic phosphate.</text>
</comment>
<comment type="catalytic activity">
    <reaction evidence="1">
        <text>5-oxo-L-proline + ATP + 2 H2O = L-glutamate + ADP + phosphate + H(+)</text>
        <dbReference type="Rhea" id="RHEA:10348"/>
        <dbReference type="ChEBI" id="CHEBI:15377"/>
        <dbReference type="ChEBI" id="CHEBI:15378"/>
        <dbReference type="ChEBI" id="CHEBI:29985"/>
        <dbReference type="ChEBI" id="CHEBI:30616"/>
        <dbReference type="ChEBI" id="CHEBI:43474"/>
        <dbReference type="ChEBI" id="CHEBI:58402"/>
        <dbReference type="ChEBI" id="CHEBI:456216"/>
        <dbReference type="EC" id="3.5.2.9"/>
    </reaction>
</comment>
<comment type="subunit">
    <text evidence="1">Forms a complex composed of PxpA, PxpB and PxpC.</text>
</comment>
<comment type="similarity">
    <text evidence="1">Belongs to the LamB/PxpA family.</text>
</comment>
<proteinExistence type="inferred from homology"/>
<protein>
    <recommendedName>
        <fullName evidence="1">5-oxoprolinase subunit A</fullName>
        <shortName evidence="1">5-OPase subunit A</shortName>
        <ecNumber evidence="1">3.5.2.9</ecNumber>
    </recommendedName>
    <alternativeName>
        <fullName evidence="1">5-oxoprolinase (ATP-hydrolyzing) subunit A</fullName>
    </alternativeName>
</protein>
<keyword id="KW-0067">ATP-binding</keyword>
<keyword id="KW-0378">Hydrolase</keyword>
<keyword id="KW-0547">Nucleotide-binding</keyword>
<dbReference type="EC" id="3.5.2.9" evidence="1"/>
<dbReference type="EMBL" id="CP000656">
    <property type="protein sequence ID" value="ABP43933.1"/>
    <property type="molecule type" value="Genomic_DNA"/>
</dbReference>
<dbReference type="SMR" id="A4T5K5"/>
<dbReference type="STRING" id="350054.Mflv_1451"/>
<dbReference type="KEGG" id="mgi:Mflv_1451"/>
<dbReference type="eggNOG" id="COG1540">
    <property type="taxonomic scope" value="Bacteria"/>
</dbReference>
<dbReference type="HOGENOM" id="CLU_069535_0_0_11"/>
<dbReference type="OrthoDB" id="9773478at2"/>
<dbReference type="GO" id="GO:0017168">
    <property type="term" value="F:5-oxoprolinase (ATP-hydrolyzing) activity"/>
    <property type="evidence" value="ECO:0007669"/>
    <property type="project" value="UniProtKB-UniRule"/>
</dbReference>
<dbReference type="GO" id="GO:0005524">
    <property type="term" value="F:ATP binding"/>
    <property type="evidence" value="ECO:0007669"/>
    <property type="project" value="UniProtKB-UniRule"/>
</dbReference>
<dbReference type="GO" id="GO:0005975">
    <property type="term" value="P:carbohydrate metabolic process"/>
    <property type="evidence" value="ECO:0007669"/>
    <property type="project" value="InterPro"/>
</dbReference>
<dbReference type="CDD" id="cd10787">
    <property type="entry name" value="LamB_YcsF_like"/>
    <property type="match status" value="1"/>
</dbReference>
<dbReference type="Gene3D" id="3.20.20.370">
    <property type="entry name" value="Glycoside hydrolase/deacetylase"/>
    <property type="match status" value="1"/>
</dbReference>
<dbReference type="HAMAP" id="MF_00691">
    <property type="entry name" value="PxpA"/>
    <property type="match status" value="1"/>
</dbReference>
<dbReference type="InterPro" id="IPR011330">
    <property type="entry name" value="Glyco_hydro/deAcase_b/a-brl"/>
</dbReference>
<dbReference type="InterPro" id="IPR005501">
    <property type="entry name" value="LamB/YcsF/PxpA-like"/>
</dbReference>
<dbReference type="NCBIfam" id="NF003814">
    <property type="entry name" value="PRK05406.1-3"/>
    <property type="match status" value="1"/>
</dbReference>
<dbReference type="NCBIfam" id="NF003816">
    <property type="entry name" value="PRK05406.1-5"/>
    <property type="match status" value="1"/>
</dbReference>
<dbReference type="PANTHER" id="PTHR30292:SF0">
    <property type="entry name" value="5-OXOPROLINASE SUBUNIT A"/>
    <property type="match status" value="1"/>
</dbReference>
<dbReference type="PANTHER" id="PTHR30292">
    <property type="entry name" value="UNCHARACTERIZED PROTEIN YBGL-RELATED"/>
    <property type="match status" value="1"/>
</dbReference>
<dbReference type="Pfam" id="PF03746">
    <property type="entry name" value="LamB_YcsF"/>
    <property type="match status" value="1"/>
</dbReference>
<dbReference type="SUPFAM" id="SSF88713">
    <property type="entry name" value="Glycoside hydrolase/deacetylase"/>
    <property type="match status" value="1"/>
</dbReference>
<name>PXPA_MYCGI</name>
<accession>A4T5K5</accession>
<organism>
    <name type="scientific">Mycolicibacterium gilvum (strain PYR-GCK)</name>
    <name type="common">Mycobacterium gilvum (strain PYR-GCK)</name>
    <dbReference type="NCBI Taxonomy" id="350054"/>
    <lineage>
        <taxon>Bacteria</taxon>
        <taxon>Bacillati</taxon>
        <taxon>Actinomycetota</taxon>
        <taxon>Actinomycetes</taxon>
        <taxon>Mycobacteriales</taxon>
        <taxon>Mycobacteriaceae</taxon>
        <taxon>Mycolicibacterium</taxon>
    </lineage>
</organism>
<feature type="chain" id="PRO_1000083121" description="5-oxoprolinase subunit A">
    <location>
        <begin position="1"/>
        <end position="252"/>
    </location>
</feature>
<gene>
    <name evidence="1" type="primary">pxpA</name>
    <name type="ordered locus">Mflv_1451</name>
</gene>
<reference key="1">
    <citation type="submission" date="2007-04" db="EMBL/GenBank/DDBJ databases">
        <title>Complete sequence of chromosome of Mycobacterium gilvum PYR-GCK.</title>
        <authorList>
            <consortium name="US DOE Joint Genome Institute"/>
            <person name="Copeland A."/>
            <person name="Lucas S."/>
            <person name="Lapidus A."/>
            <person name="Barry K."/>
            <person name="Detter J.C."/>
            <person name="Glavina del Rio T."/>
            <person name="Hammon N."/>
            <person name="Israni S."/>
            <person name="Dalin E."/>
            <person name="Tice H."/>
            <person name="Pitluck S."/>
            <person name="Chain P."/>
            <person name="Malfatti S."/>
            <person name="Shin M."/>
            <person name="Vergez L."/>
            <person name="Schmutz J."/>
            <person name="Larimer F."/>
            <person name="Land M."/>
            <person name="Hauser L."/>
            <person name="Kyrpides N."/>
            <person name="Mikhailova N."/>
            <person name="Miller C."/>
            <person name="Richardson P."/>
        </authorList>
    </citation>
    <scope>NUCLEOTIDE SEQUENCE [LARGE SCALE GENOMIC DNA]</scope>
    <source>
        <strain>PYR-GCK</strain>
    </source>
</reference>
<sequence length="252" mass="26252">MSSVDLNADLGEGFGVWALGDDDAMLDIVTSANVACGFHAGDPATLRRVCEAAAARGVRIGAQVSYRDLAGFGRRFIDVSSEDLIADVMYQIGALSALAAAAGSSVSYVKPHGALYNAVVTNRLQAHALAAAVHAVDPALPVLGLAGSVFFGAAEELGLRTVPEAFADRAYRPDGRLVSRRERNSVLHDVDEIAERVISMVSRGRVHAVDGSTIPITVESVCVHGDSPGAVQIATAVRKRLVAEGVTLASFS</sequence>
<evidence type="ECO:0000255" key="1">
    <source>
        <dbReference type="HAMAP-Rule" id="MF_00691"/>
    </source>
</evidence>